<organism>
    <name type="scientific">Candida glabrata (strain ATCC 2001 / BCRC 20586 / JCM 3761 / NBRC 0622 / NRRL Y-65 / CBS 138)</name>
    <name type="common">Yeast</name>
    <name type="synonym">Nakaseomyces glabratus</name>
    <dbReference type="NCBI Taxonomy" id="284593"/>
    <lineage>
        <taxon>Eukaryota</taxon>
        <taxon>Fungi</taxon>
        <taxon>Dikarya</taxon>
        <taxon>Ascomycota</taxon>
        <taxon>Saccharomycotina</taxon>
        <taxon>Saccharomycetes</taxon>
        <taxon>Saccharomycetales</taxon>
        <taxon>Saccharomycetaceae</taxon>
        <taxon>Nakaseomyces</taxon>
    </lineage>
</organism>
<keyword id="KW-0256">Endoplasmic reticulum</keyword>
<keyword id="KW-0325">Glycoprotein</keyword>
<keyword id="KW-0337">GPI-anchor biosynthesis</keyword>
<keyword id="KW-0472">Membrane</keyword>
<keyword id="KW-1185">Reference proteome</keyword>
<keyword id="KW-0812">Transmembrane</keyword>
<keyword id="KW-1133">Transmembrane helix</keyword>
<evidence type="ECO:0000250" key="1"/>
<evidence type="ECO:0000255" key="2"/>
<evidence type="ECO:0000305" key="3"/>
<protein>
    <recommendedName>
        <fullName>Glycosylphosphatidylinositol anchor biosynthesis protein 11</fullName>
    </recommendedName>
</protein>
<sequence length="217" mass="25041">MPVKKRTPLKHKSVSFSDDITQTQHNHHHRKKQNGERPPVFIRKTWLTIPWHLIALVYIYVKVFNNYNTAELLACLVPLQILYTIFQFNKATIYGNKRLKFNYSLAAISILACIVLSIPVVVIIILFGAPLLELLWETWLLALHCSFLAYPAVYSVLNCDFKVGLWKRYFILIVVGCWISCVVIPLDWDRDWQAWPIPIVIGAYLGAFVGFAYGAYL</sequence>
<name>GPI11_CANGA</name>
<accession>Q6FSD1</accession>
<feature type="chain" id="PRO_0000191764" description="Glycosylphosphatidylinositol anchor biosynthesis protein 11">
    <location>
        <begin position="1"/>
        <end position="217"/>
    </location>
</feature>
<feature type="transmembrane region" description="Helical" evidence="2">
    <location>
        <begin position="45"/>
        <end position="65"/>
    </location>
</feature>
<feature type="transmembrane region" description="Helical" evidence="2">
    <location>
        <begin position="68"/>
        <end position="88"/>
    </location>
</feature>
<feature type="transmembrane region" description="Helical" evidence="2">
    <location>
        <begin position="107"/>
        <end position="127"/>
    </location>
</feature>
<feature type="transmembrane region" description="Helical" evidence="2">
    <location>
        <begin position="134"/>
        <end position="154"/>
    </location>
</feature>
<feature type="transmembrane region" description="Helical" evidence="2">
    <location>
        <begin position="169"/>
        <end position="189"/>
    </location>
</feature>
<feature type="transmembrane region" description="Helical" evidence="2">
    <location>
        <begin position="197"/>
        <end position="217"/>
    </location>
</feature>
<feature type="glycosylation site" description="N-linked (GlcNAc...) asparagine" evidence="2">
    <location>
        <position position="102"/>
    </location>
</feature>
<comment type="function">
    <text evidence="1">Acts in the GPI biosynthetic pathway between GlcNAc-PI synthesis and GPI transfer to protein.</text>
</comment>
<comment type="pathway">
    <text>Glycolipid biosynthesis; glycosylphosphatidylinositol-anchor biosynthesis.</text>
</comment>
<comment type="subcellular location">
    <subcellularLocation>
        <location evidence="1">Endoplasmic reticulum membrane</location>
        <topology evidence="1">Multi-pass membrane protein</topology>
    </subcellularLocation>
</comment>
<comment type="similarity">
    <text evidence="3">Belongs to the PIGF family.</text>
</comment>
<proteinExistence type="inferred from homology"/>
<dbReference type="EMBL" id="CR380954">
    <property type="protein sequence ID" value="CAG59796.1"/>
    <property type="molecule type" value="Genomic_DNA"/>
</dbReference>
<dbReference type="RefSeq" id="XP_446863.1">
    <property type="nucleotide sequence ID" value="XM_446863.1"/>
</dbReference>
<dbReference type="FunCoup" id="Q6FSD1">
    <property type="interactions" value="166"/>
</dbReference>
<dbReference type="STRING" id="284593.Q6FSD1"/>
<dbReference type="GlyCosmos" id="Q6FSD1">
    <property type="glycosylation" value="1 site, No reported glycans"/>
</dbReference>
<dbReference type="EnsemblFungi" id="CAGL0H01485g-T">
    <property type="protein sequence ID" value="CAGL0H01485g-T-p1"/>
    <property type="gene ID" value="CAGL0H01485g"/>
</dbReference>
<dbReference type="KEGG" id="cgr:2888443"/>
<dbReference type="CGD" id="CAL0131732">
    <property type="gene designation" value="CAGL0H01485g"/>
</dbReference>
<dbReference type="VEuPathDB" id="FungiDB:B1J91_H01485g"/>
<dbReference type="VEuPathDB" id="FungiDB:CAGL0H01485g"/>
<dbReference type="eggNOG" id="KOG3144">
    <property type="taxonomic scope" value="Eukaryota"/>
</dbReference>
<dbReference type="HOGENOM" id="CLU_111662_0_0_1"/>
<dbReference type="InParanoid" id="Q6FSD1"/>
<dbReference type="OMA" id="FNCDFKV"/>
<dbReference type="UniPathway" id="UPA00196"/>
<dbReference type="Proteomes" id="UP000002428">
    <property type="component" value="Chromosome H"/>
</dbReference>
<dbReference type="GO" id="GO:0005789">
    <property type="term" value="C:endoplasmic reticulum membrane"/>
    <property type="evidence" value="ECO:0007669"/>
    <property type="project" value="UniProtKB-SubCell"/>
</dbReference>
<dbReference type="GO" id="GO:0051377">
    <property type="term" value="F:mannose-ethanolamine phosphotransferase activity"/>
    <property type="evidence" value="ECO:0007669"/>
    <property type="project" value="EnsemblFungi"/>
</dbReference>
<dbReference type="GO" id="GO:0006506">
    <property type="term" value="P:GPI anchor biosynthetic process"/>
    <property type="evidence" value="ECO:0007669"/>
    <property type="project" value="UniProtKB-UniPathway"/>
</dbReference>
<dbReference type="InterPro" id="IPR009580">
    <property type="entry name" value="GPI_biosynthesis_protein_Pig-F"/>
</dbReference>
<dbReference type="Pfam" id="PF06699">
    <property type="entry name" value="PIG-F"/>
    <property type="match status" value="1"/>
</dbReference>
<reference key="1">
    <citation type="journal article" date="2004" name="Nature">
        <title>Genome evolution in yeasts.</title>
        <authorList>
            <person name="Dujon B."/>
            <person name="Sherman D."/>
            <person name="Fischer G."/>
            <person name="Durrens P."/>
            <person name="Casaregola S."/>
            <person name="Lafontaine I."/>
            <person name="de Montigny J."/>
            <person name="Marck C."/>
            <person name="Neuveglise C."/>
            <person name="Talla E."/>
            <person name="Goffard N."/>
            <person name="Frangeul L."/>
            <person name="Aigle M."/>
            <person name="Anthouard V."/>
            <person name="Babour A."/>
            <person name="Barbe V."/>
            <person name="Barnay S."/>
            <person name="Blanchin S."/>
            <person name="Beckerich J.-M."/>
            <person name="Beyne E."/>
            <person name="Bleykasten C."/>
            <person name="Boisrame A."/>
            <person name="Boyer J."/>
            <person name="Cattolico L."/>
            <person name="Confanioleri F."/>
            <person name="de Daruvar A."/>
            <person name="Despons L."/>
            <person name="Fabre E."/>
            <person name="Fairhead C."/>
            <person name="Ferry-Dumazet H."/>
            <person name="Groppi A."/>
            <person name="Hantraye F."/>
            <person name="Hennequin C."/>
            <person name="Jauniaux N."/>
            <person name="Joyet P."/>
            <person name="Kachouri R."/>
            <person name="Kerrest A."/>
            <person name="Koszul R."/>
            <person name="Lemaire M."/>
            <person name="Lesur I."/>
            <person name="Ma L."/>
            <person name="Muller H."/>
            <person name="Nicaud J.-M."/>
            <person name="Nikolski M."/>
            <person name="Oztas S."/>
            <person name="Ozier-Kalogeropoulos O."/>
            <person name="Pellenz S."/>
            <person name="Potier S."/>
            <person name="Richard G.-F."/>
            <person name="Straub M.-L."/>
            <person name="Suleau A."/>
            <person name="Swennen D."/>
            <person name="Tekaia F."/>
            <person name="Wesolowski-Louvel M."/>
            <person name="Westhof E."/>
            <person name="Wirth B."/>
            <person name="Zeniou-Meyer M."/>
            <person name="Zivanovic Y."/>
            <person name="Bolotin-Fukuhara M."/>
            <person name="Thierry A."/>
            <person name="Bouchier C."/>
            <person name="Caudron B."/>
            <person name="Scarpelli C."/>
            <person name="Gaillardin C."/>
            <person name="Weissenbach J."/>
            <person name="Wincker P."/>
            <person name="Souciet J.-L."/>
        </authorList>
    </citation>
    <scope>NUCLEOTIDE SEQUENCE [LARGE SCALE GENOMIC DNA]</scope>
    <source>
        <strain>ATCC 2001 / BCRC 20586 / JCM 3761 / NBRC 0622 / NRRL Y-65 / CBS 138</strain>
    </source>
</reference>
<gene>
    <name type="primary">GPI11</name>
    <name type="ordered locus">CAGL0H01485g</name>
</gene>